<evidence type="ECO:0000255" key="1">
    <source>
        <dbReference type="HAMAP-Rule" id="MF_00408"/>
    </source>
</evidence>
<reference key="1">
    <citation type="submission" date="2007-06" db="EMBL/GenBank/DDBJ databases">
        <title>Complete sequence of Methanococcus maripaludis C7.</title>
        <authorList>
            <consortium name="US DOE Joint Genome Institute"/>
            <person name="Copeland A."/>
            <person name="Lucas S."/>
            <person name="Lapidus A."/>
            <person name="Barry K."/>
            <person name="Glavina del Rio T."/>
            <person name="Dalin E."/>
            <person name="Tice H."/>
            <person name="Pitluck S."/>
            <person name="Clum A."/>
            <person name="Schmutz J."/>
            <person name="Larimer F."/>
            <person name="Land M."/>
            <person name="Hauser L."/>
            <person name="Kyrpides N."/>
            <person name="Anderson I."/>
            <person name="Sieprawska-Lupa M."/>
            <person name="Whitman W.B."/>
            <person name="Richardson P."/>
        </authorList>
    </citation>
    <scope>NUCLEOTIDE SEQUENCE [LARGE SCALE GENOMIC DNA]</scope>
    <source>
        <strain>C7 / ATCC BAA-1331</strain>
    </source>
</reference>
<protein>
    <recommendedName>
        <fullName evidence="1">TATA-box-binding protein</fullName>
    </recommendedName>
    <alternativeName>
        <fullName evidence="1">Box A-binding protein</fullName>
        <shortName evidence="1">BAP</shortName>
    </alternativeName>
    <alternativeName>
        <fullName evidence="1">TATA sequence-binding protein</fullName>
        <shortName evidence="1">TBP</shortName>
    </alternativeName>
    <alternativeName>
        <fullName evidence="1">TATA-box factor</fullName>
    </alternativeName>
</protein>
<proteinExistence type="inferred from homology"/>
<sequence>MEPEIKIVNVVVSTQIGTDIDLEYAADILDNAEYEPEQFPGLVCRLSDPKVALLIFRSGKLNCTGAKSKDDAVIAINKIIKELQEAGMDIIDNPEVNVQNMVATTELGMEPNLDDISTLECTEYEPEQFPGLVYRLSDPKVVVLIFGSGKVVITGLKRIDDAYVAFNKILTTLKELEEELY</sequence>
<dbReference type="EMBL" id="CP000745">
    <property type="protein sequence ID" value="ABR66323.1"/>
    <property type="molecule type" value="Genomic_DNA"/>
</dbReference>
<dbReference type="SMR" id="A6VIP7"/>
<dbReference type="STRING" id="426368.MmarC7_1260"/>
<dbReference type="KEGG" id="mmz:MmarC7_1260"/>
<dbReference type="eggNOG" id="arCOG01764">
    <property type="taxonomic scope" value="Archaea"/>
</dbReference>
<dbReference type="HOGENOM" id="CLU_060161_4_3_2"/>
<dbReference type="OrthoDB" id="350539at2157"/>
<dbReference type="GO" id="GO:0003677">
    <property type="term" value="F:DNA binding"/>
    <property type="evidence" value="ECO:0007669"/>
    <property type="project" value="UniProtKB-KW"/>
</dbReference>
<dbReference type="GO" id="GO:0003700">
    <property type="term" value="F:DNA-binding transcription factor activity"/>
    <property type="evidence" value="ECO:0007669"/>
    <property type="project" value="UniProtKB-UniRule"/>
</dbReference>
<dbReference type="GO" id="GO:0006352">
    <property type="term" value="P:DNA-templated transcription initiation"/>
    <property type="evidence" value="ECO:0007669"/>
    <property type="project" value="InterPro"/>
</dbReference>
<dbReference type="CDD" id="cd04518">
    <property type="entry name" value="TBP_archaea"/>
    <property type="match status" value="1"/>
</dbReference>
<dbReference type="FunFam" id="3.30.310.10:FF:000007">
    <property type="entry name" value="TATA-box-binding protein"/>
    <property type="match status" value="1"/>
</dbReference>
<dbReference type="FunFam" id="3.30.310.10:FF:000010">
    <property type="entry name" value="TATA-box-binding protein"/>
    <property type="match status" value="1"/>
</dbReference>
<dbReference type="Gene3D" id="3.30.310.10">
    <property type="entry name" value="TATA-Binding Protein"/>
    <property type="match status" value="2"/>
</dbReference>
<dbReference type="HAMAP" id="MF_00408">
    <property type="entry name" value="TATA_bind_prot_arch"/>
    <property type="match status" value="1"/>
</dbReference>
<dbReference type="InterPro" id="IPR000814">
    <property type="entry name" value="TBP"/>
</dbReference>
<dbReference type="InterPro" id="IPR033711">
    <property type="entry name" value="TBP_archaea"/>
</dbReference>
<dbReference type="InterPro" id="IPR030491">
    <property type="entry name" value="TBP_CS"/>
</dbReference>
<dbReference type="InterPro" id="IPR012295">
    <property type="entry name" value="TBP_dom_sf"/>
</dbReference>
<dbReference type="NCBIfam" id="NF001593">
    <property type="entry name" value="PRK00394.1-2"/>
    <property type="match status" value="1"/>
</dbReference>
<dbReference type="NCBIfam" id="NF001594">
    <property type="entry name" value="PRK00394.1-3"/>
    <property type="match status" value="1"/>
</dbReference>
<dbReference type="PANTHER" id="PTHR10126">
    <property type="entry name" value="TATA-BOX BINDING PROTEIN"/>
    <property type="match status" value="1"/>
</dbReference>
<dbReference type="Pfam" id="PF00352">
    <property type="entry name" value="TBP"/>
    <property type="match status" value="2"/>
</dbReference>
<dbReference type="PRINTS" id="PR00686">
    <property type="entry name" value="TIFACTORIID"/>
</dbReference>
<dbReference type="SUPFAM" id="SSF55945">
    <property type="entry name" value="TATA-box binding protein-like"/>
    <property type="match status" value="2"/>
</dbReference>
<dbReference type="PROSITE" id="PS00351">
    <property type="entry name" value="TFIID"/>
    <property type="match status" value="2"/>
</dbReference>
<organism>
    <name type="scientific">Methanococcus maripaludis (strain C7 / ATCC BAA-1331)</name>
    <dbReference type="NCBI Taxonomy" id="426368"/>
    <lineage>
        <taxon>Archaea</taxon>
        <taxon>Methanobacteriati</taxon>
        <taxon>Methanobacteriota</taxon>
        <taxon>Methanomada group</taxon>
        <taxon>Methanococci</taxon>
        <taxon>Methanococcales</taxon>
        <taxon>Methanococcaceae</taxon>
        <taxon>Methanococcus</taxon>
    </lineage>
</organism>
<feature type="chain" id="PRO_1000049880" description="TATA-box-binding protein">
    <location>
        <begin position="1"/>
        <end position="181"/>
    </location>
</feature>
<feature type="repeat" description="1">
    <location>
        <begin position="7"/>
        <end position="83"/>
    </location>
</feature>
<feature type="repeat" description="2">
    <location>
        <begin position="98"/>
        <end position="173"/>
    </location>
</feature>
<name>TBP_METM7</name>
<gene>
    <name evidence="1" type="primary">tbp</name>
    <name type="ordered locus">MmarC7_1260</name>
</gene>
<comment type="function">
    <text evidence="1">General factor that plays a role in the activation of archaeal genes transcribed by RNA polymerase. Binds specifically to the TATA box promoter element which lies close to the position of transcription initiation.</text>
</comment>
<comment type="similarity">
    <text evidence="1">Belongs to the TBP family.</text>
</comment>
<keyword id="KW-0238">DNA-binding</keyword>
<keyword id="KW-0677">Repeat</keyword>
<keyword id="KW-0804">Transcription</keyword>
<keyword id="KW-0805">Transcription regulation</keyword>
<accession>A6VIP7</accession>